<comment type="function">
    <text evidence="1">Catalyzes the reversible conversion of 2-phosphoglycerate (2-PG) into phosphoenolpyruvate (PEP). It is essential for the degradation of carbohydrates via glycolysis.</text>
</comment>
<comment type="catalytic activity">
    <reaction evidence="1">
        <text>(2R)-2-phosphoglycerate = phosphoenolpyruvate + H2O</text>
        <dbReference type="Rhea" id="RHEA:10164"/>
        <dbReference type="ChEBI" id="CHEBI:15377"/>
        <dbReference type="ChEBI" id="CHEBI:58289"/>
        <dbReference type="ChEBI" id="CHEBI:58702"/>
        <dbReference type="EC" id="4.2.1.11"/>
    </reaction>
</comment>
<comment type="cofactor">
    <cofactor evidence="1">
        <name>Mg(2+)</name>
        <dbReference type="ChEBI" id="CHEBI:18420"/>
    </cofactor>
    <text evidence="1">Binds a second Mg(2+) ion via substrate during catalysis.</text>
</comment>
<comment type="pathway">
    <text evidence="1">Carbohydrate degradation; glycolysis; pyruvate from D-glyceraldehyde 3-phosphate: step 4/5.</text>
</comment>
<comment type="subunit">
    <text evidence="1">Component of the RNA degradosome, a multiprotein complex involved in RNA processing and mRNA degradation.</text>
</comment>
<comment type="subcellular location">
    <subcellularLocation>
        <location evidence="1">Cytoplasm</location>
    </subcellularLocation>
    <subcellularLocation>
        <location evidence="1">Secreted</location>
    </subcellularLocation>
    <subcellularLocation>
        <location evidence="1">Cell surface</location>
    </subcellularLocation>
    <text evidence="1">Fractions of enolase are present in both the cytoplasm and on the cell surface.</text>
</comment>
<comment type="similarity">
    <text evidence="1">Belongs to the enolase family.</text>
</comment>
<organism>
    <name type="scientific">Actinobacillus pleuropneumoniae serotype 7 (strain AP76)</name>
    <dbReference type="NCBI Taxonomy" id="537457"/>
    <lineage>
        <taxon>Bacteria</taxon>
        <taxon>Pseudomonadati</taxon>
        <taxon>Pseudomonadota</taxon>
        <taxon>Gammaproteobacteria</taxon>
        <taxon>Pasteurellales</taxon>
        <taxon>Pasteurellaceae</taxon>
        <taxon>Actinobacillus</taxon>
    </lineage>
</organism>
<evidence type="ECO:0000255" key="1">
    <source>
        <dbReference type="HAMAP-Rule" id="MF_00318"/>
    </source>
</evidence>
<name>ENO_ACTP7</name>
<protein>
    <recommendedName>
        <fullName evidence="1">Enolase</fullName>
        <ecNumber evidence="1">4.2.1.11</ecNumber>
    </recommendedName>
    <alternativeName>
        <fullName evidence="1">2-phospho-D-glycerate hydro-lyase</fullName>
    </alternativeName>
    <alternativeName>
        <fullName evidence="1">2-phosphoglycerate dehydratase</fullName>
    </alternativeName>
</protein>
<feature type="chain" id="PRO_1000115821" description="Enolase">
    <location>
        <begin position="1"/>
        <end position="436"/>
    </location>
</feature>
<feature type="active site" description="Proton donor" evidence="1">
    <location>
        <position position="209"/>
    </location>
</feature>
<feature type="active site" description="Proton acceptor" evidence="1">
    <location>
        <position position="343"/>
    </location>
</feature>
<feature type="binding site" evidence="1">
    <location>
        <position position="167"/>
    </location>
    <ligand>
        <name>(2R)-2-phosphoglycerate</name>
        <dbReference type="ChEBI" id="CHEBI:58289"/>
    </ligand>
</feature>
<feature type="binding site" evidence="1">
    <location>
        <position position="246"/>
    </location>
    <ligand>
        <name>Mg(2+)</name>
        <dbReference type="ChEBI" id="CHEBI:18420"/>
    </ligand>
</feature>
<feature type="binding site" evidence="1">
    <location>
        <position position="291"/>
    </location>
    <ligand>
        <name>Mg(2+)</name>
        <dbReference type="ChEBI" id="CHEBI:18420"/>
    </ligand>
</feature>
<feature type="binding site" evidence="1">
    <location>
        <position position="318"/>
    </location>
    <ligand>
        <name>Mg(2+)</name>
        <dbReference type="ChEBI" id="CHEBI:18420"/>
    </ligand>
</feature>
<feature type="binding site" evidence="1">
    <location>
        <position position="343"/>
    </location>
    <ligand>
        <name>(2R)-2-phosphoglycerate</name>
        <dbReference type="ChEBI" id="CHEBI:58289"/>
    </ligand>
</feature>
<feature type="binding site" evidence="1">
    <location>
        <position position="372"/>
    </location>
    <ligand>
        <name>(2R)-2-phosphoglycerate</name>
        <dbReference type="ChEBI" id="CHEBI:58289"/>
    </ligand>
</feature>
<feature type="binding site" evidence="1">
    <location>
        <position position="373"/>
    </location>
    <ligand>
        <name>(2R)-2-phosphoglycerate</name>
        <dbReference type="ChEBI" id="CHEBI:58289"/>
    </ligand>
</feature>
<feature type="binding site" evidence="1">
    <location>
        <position position="394"/>
    </location>
    <ligand>
        <name>(2R)-2-phosphoglycerate</name>
        <dbReference type="ChEBI" id="CHEBI:58289"/>
    </ligand>
</feature>
<gene>
    <name evidence="1" type="primary">eno</name>
    <name type="ordered locus">APP7_1171</name>
</gene>
<accession>B3GY00</accession>
<proteinExistence type="inferred from homology"/>
<keyword id="KW-0963">Cytoplasm</keyword>
<keyword id="KW-0324">Glycolysis</keyword>
<keyword id="KW-0456">Lyase</keyword>
<keyword id="KW-0460">Magnesium</keyword>
<keyword id="KW-0479">Metal-binding</keyword>
<keyword id="KW-0964">Secreted</keyword>
<dbReference type="EC" id="4.2.1.11" evidence="1"/>
<dbReference type="EMBL" id="CP001091">
    <property type="protein sequence ID" value="ACE61823.1"/>
    <property type="molecule type" value="Genomic_DNA"/>
</dbReference>
<dbReference type="RefSeq" id="WP_005597992.1">
    <property type="nucleotide sequence ID" value="NC_010939.1"/>
</dbReference>
<dbReference type="SMR" id="B3GY00"/>
<dbReference type="GeneID" id="48599345"/>
<dbReference type="KEGG" id="apa:APP7_1171"/>
<dbReference type="HOGENOM" id="CLU_031223_2_1_6"/>
<dbReference type="UniPathway" id="UPA00109">
    <property type="reaction ID" value="UER00187"/>
</dbReference>
<dbReference type="Proteomes" id="UP000001226">
    <property type="component" value="Chromosome"/>
</dbReference>
<dbReference type="GO" id="GO:0009986">
    <property type="term" value="C:cell surface"/>
    <property type="evidence" value="ECO:0007669"/>
    <property type="project" value="UniProtKB-SubCell"/>
</dbReference>
<dbReference type="GO" id="GO:0005576">
    <property type="term" value="C:extracellular region"/>
    <property type="evidence" value="ECO:0007669"/>
    <property type="project" value="UniProtKB-SubCell"/>
</dbReference>
<dbReference type="GO" id="GO:0000015">
    <property type="term" value="C:phosphopyruvate hydratase complex"/>
    <property type="evidence" value="ECO:0007669"/>
    <property type="project" value="InterPro"/>
</dbReference>
<dbReference type="GO" id="GO:0000287">
    <property type="term" value="F:magnesium ion binding"/>
    <property type="evidence" value="ECO:0007669"/>
    <property type="project" value="UniProtKB-UniRule"/>
</dbReference>
<dbReference type="GO" id="GO:0004634">
    <property type="term" value="F:phosphopyruvate hydratase activity"/>
    <property type="evidence" value="ECO:0007669"/>
    <property type="project" value="UniProtKB-UniRule"/>
</dbReference>
<dbReference type="GO" id="GO:0006096">
    <property type="term" value="P:glycolytic process"/>
    <property type="evidence" value="ECO:0007669"/>
    <property type="project" value="UniProtKB-UniRule"/>
</dbReference>
<dbReference type="CDD" id="cd03313">
    <property type="entry name" value="enolase"/>
    <property type="match status" value="1"/>
</dbReference>
<dbReference type="FunFam" id="3.20.20.120:FF:000001">
    <property type="entry name" value="Enolase"/>
    <property type="match status" value="1"/>
</dbReference>
<dbReference type="FunFam" id="3.30.390.10:FF:000001">
    <property type="entry name" value="Enolase"/>
    <property type="match status" value="1"/>
</dbReference>
<dbReference type="Gene3D" id="3.20.20.120">
    <property type="entry name" value="Enolase-like C-terminal domain"/>
    <property type="match status" value="1"/>
</dbReference>
<dbReference type="Gene3D" id="3.30.390.10">
    <property type="entry name" value="Enolase-like, N-terminal domain"/>
    <property type="match status" value="1"/>
</dbReference>
<dbReference type="HAMAP" id="MF_00318">
    <property type="entry name" value="Enolase"/>
    <property type="match status" value="1"/>
</dbReference>
<dbReference type="InterPro" id="IPR000941">
    <property type="entry name" value="Enolase"/>
</dbReference>
<dbReference type="InterPro" id="IPR036849">
    <property type="entry name" value="Enolase-like_C_sf"/>
</dbReference>
<dbReference type="InterPro" id="IPR029017">
    <property type="entry name" value="Enolase-like_N"/>
</dbReference>
<dbReference type="InterPro" id="IPR020810">
    <property type="entry name" value="Enolase_C"/>
</dbReference>
<dbReference type="InterPro" id="IPR020809">
    <property type="entry name" value="Enolase_CS"/>
</dbReference>
<dbReference type="InterPro" id="IPR020811">
    <property type="entry name" value="Enolase_N"/>
</dbReference>
<dbReference type="NCBIfam" id="TIGR01060">
    <property type="entry name" value="eno"/>
    <property type="match status" value="1"/>
</dbReference>
<dbReference type="PANTHER" id="PTHR11902">
    <property type="entry name" value="ENOLASE"/>
    <property type="match status" value="1"/>
</dbReference>
<dbReference type="PANTHER" id="PTHR11902:SF1">
    <property type="entry name" value="ENOLASE"/>
    <property type="match status" value="1"/>
</dbReference>
<dbReference type="Pfam" id="PF00113">
    <property type="entry name" value="Enolase_C"/>
    <property type="match status" value="1"/>
</dbReference>
<dbReference type="Pfam" id="PF03952">
    <property type="entry name" value="Enolase_N"/>
    <property type="match status" value="1"/>
</dbReference>
<dbReference type="PIRSF" id="PIRSF001400">
    <property type="entry name" value="Enolase"/>
    <property type="match status" value="1"/>
</dbReference>
<dbReference type="PRINTS" id="PR00148">
    <property type="entry name" value="ENOLASE"/>
</dbReference>
<dbReference type="SFLD" id="SFLDS00001">
    <property type="entry name" value="Enolase"/>
    <property type="match status" value="1"/>
</dbReference>
<dbReference type="SFLD" id="SFLDF00002">
    <property type="entry name" value="enolase"/>
    <property type="match status" value="1"/>
</dbReference>
<dbReference type="SMART" id="SM01192">
    <property type="entry name" value="Enolase_C"/>
    <property type="match status" value="1"/>
</dbReference>
<dbReference type="SMART" id="SM01193">
    <property type="entry name" value="Enolase_N"/>
    <property type="match status" value="1"/>
</dbReference>
<dbReference type="SUPFAM" id="SSF51604">
    <property type="entry name" value="Enolase C-terminal domain-like"/>
    <property type="match status" value="1"/>
</dbReference>
<dbReference type="SUPFAM" id="SSF54826">
    <property type="entry name" value="Enolase N-terminal domain-like"/>
    <property type="match status" value="1"/>
</dbReference>
<dbReference type="PROSITE" id="PS00164">
    <property type="entry name" value="ENOLASE"/>
    <property type="match status" value="1"/>
</dbReference>
<sequence>MAKIVKVIGREIIDSRGNPTVEAEVHLEGGFVGLAAAPSGASTGSREALELRDGDKSRFLGKGVLKAVSAVNNEIAQAILGKDGSAQAEIDQIMIDLDGTDNKSKFGANAILAVSLATAKAAAASKGLPLYAYIAELNGTPGVYSMPLPMMNIINGGEHADNNVDIQEFMIQPVGASTLKEALRIGAEVFHNLAKVLKSKGLNTAVGDEGGFAPNLASNADALACIKEAVEKAGYVLGKDVTLAMDCASSEFYNKENGLYEMKGEGKSFTSQEFTHYLEGLCNEYPIKSIEDGQDESDWEGFAYQTKVLGGKIQLVGDDLFVTNTKILKEGIEKGIANSILIKFNQIGSLTETLAAIKMAKDAGYTAVISHRSGETEDATIADLAVGTAAGQIKTGSMSRSDRVAKYNQLIRIEEALAAAGTPAPFNGLKEVKGQA</sequence>
<reference key="1">
    <citation type="submission" date="2008-06" db="EMBL/GenBank/DDBJ databases">
        <title>Genome and proteome analysis of A. pleuropneumoniae serotype 7.</title>
        <authorList>
            <person name="Linke B."/>
            <person name="Buettner F."/>
            <person name="Martinez-Arias R."/>
            <person name="Goesmann A."/>
            <person name="Baltes N."/>
            <person name="Tegetmeyer H."/>
            <person name="Singh M."/>
            <person name="Gerlach G.F."/>
        </authorList>
    </citation>
    <scope>NUCLEOTIDE SEQUENCE [LARGE SCALE GENOMIC DNA]</scope>
    <source>
        <strain>AP76</strain>
    </source>
</reference>